<sequence length="328" mass="36445">MSEKIYEYKDENNWFIGKMTGHNLISGWGVKHRTIKKIDDLLDGIAATLDWENPKGYDVSVVRYQSPLSLITFIIDMINQETQREIKVIPHAGTILLMENAKLLAVYLPEGGVSTATFFATSEQGFGDTILIATRNEGKTKEFRNLFGQLGYRVENLNDYPELPEVAETGTTFEENARLKAETISHLTGKMVLADDSGLKVDALGDLPGVWSARFSGPDATDAKNNAKLLHELAMVFDQKKRSAQFHTTLVVAAPNKDSLVVEAEWPGYIATQPKGENGFGYDPVFIVGETGRHAAELEADQKNQLSHRGQAVRKLMEVFPAWQAKQS</sequence>
<keyword id="KW-0378">Hydrolase</keyword>
<keyword id="KW-0460">Magnesium</keyword>
<keyword id="KW-0479">Metal-binding</keyword>
<keyword id="KW-0546">Nucleotide metabolism</keyword>
<keyword id="KW-0547">Nucleotide-binding</keyword>
<reference key="1">
    <citation type="journal article" date="2004" name="J. Infect. Dis.">
        <title>Progress toward characterization of the group A Streptococcus metagenome: complete genome sequence of a macrolide-resistant serotype M6 strain.</title>
        <authorList>
            <person name="Banks D.J."/>
            <person name="Porcella S.F."/>
            <person name="Barbian K.D."/>
            <person name="Beres S.B."/>
            <person name="Philips L.E."/>
            <person name="Voyich J.M."/>
            <person name="DeLeo F.R."/>
            <person name="Martin J.M."/>
            <person name="Somerville G.A."/>
            <person name="Musser J.M."/>
        </authorList>
    </citation>
    <scope>NUCLEOTIDE SEQUENCE [LARGE SCALE GENOMIC DNA]</scope>
    <source>
        <strain>ATCC BAA-946 / MGAS10394</strain>
    </source>
</reference>
<dbReference type="EC" id="3.6.1.66" evidence="1"/>
<dbReference type="EMBL" id="CP000003">
    <property type="protein sequence ID" value="AAT86465.1"/>
    <property type="status" value="ALT_INIT"/>
    <property type="molecule type" value="Genomic_DNA"/>
</dbReference>
<dbReference type="RefSeq" id="WP_011184197.1">
    <property type="nucleotide sequence ID" value="NC_006086.1"/>
</dbReference>
<dbReference type="SMR" id="Q5XDP8"/>
<dbReference type="KEGG" id="spa:M6_Spy0330"/>
<dbReference type="HOGENOM" id="CLU_863088_0_0_9"/>
<dbReference type="Proteomes" id="UP000001167">
    <property type="component" value="Chromosome"/>
</dbReference>
<dbReference type="GO" id="GO:0005829">
    <property type="term" value="C:cytosol"/>
    <property type="evidence" value="ECO:0007669"/>
    <property type="project" value="TreeGrafter"/>
</dbReference>
<dbReference type="GO" id="GO:0035870">
    <property type="term" value="F:dITP diphosphatase activity"/>
    <property type="evidence" value="ECO:0007669"/>
    <property type="project" value="RHEA"/>
</dbReference>
<dbReference type="GO" id="GO:0036220">
    <property type="term" value="F:ITP diphosphatase activity"/>
    <property type="evidence" value="ECO:0007669"/>
    <property type="project" value="UniProtKB-EC"/>
</dbReference>
<dbReference type="GO" id="GO:0046872">
    <property type="term" value="F:metal ion binding"/>
    <property type="evidence" value="ECO:0007669"/>
    <property type="project" value="UniProtKB-KW"/>
</dbReference>
<dbReference type="GO" id="GO:0000166">
    <property type="term" value="F:nucleotide binding"/>
    <property type="evidence" value="ECO:0007669"/>
    <property type="project" value="UniProtKB-KW"/>
</dbReference>
<dbReference type="GO" id="GO:0017111">
    <property type="term" value="F:ribonucleoside triphosphate phosphatase activity"/>
    <property type="evidence" value="ECO:0007669"/>
    <property type="project" value="InterPro"/>
</dbReference>
<dbReference type="GO" id="GO:0036222">
    <property type="term" value="F:XTP diphosphatase activity"/>
    <property type="evidence" value="ECO:0007669"/>
    <property type="project" value="RHEA"/>
</dbReference>
<dbReference type="GO" id="GO:0009117">
    <property type="term" value="P:nucleotide metabolic process"/>
    <property type="evidence" value="ECO:0007669"/>
    <property type="project" value="UniProtKB-KW"/>
</dbReference>
<dbReference type="GO" id="GO:0009146">
    <property type="term" value="P:purine nucleoside triphosphate catabolic process"/>
    <property type="evidence" value="ECO:0007669"/>
    <property type="project" value="UniProtKB-UniRule"/>
</dbReference>
<dbReference type="CDD" id="cd00515">
    <property type="entry name" value="HAM1"/>
    <property type="match status" value="1"/>
</dbReference>
<dbReference type="FunFam" id="3.90.950.10:FF:000001">
    <property type="entry name" value="dITP/XTP pyrophosphatase"/>
    <property type="match status" value="1"/>
</dbReference>
<dbReference type="Gene3D" id="3.90.950.10">
    <property type="match status" value="1"/>
</dbReference>
<dbReference type="HAMAP" id="MF_01405">
    <property type="entry name" value="Non_canon_purine_NTPase"/>
    <property type="match status" value="1"/>
</dbReference>
<dbReference type="InterPro" id="IPR020922">
    <property type="entry name" value="dITP/XTP_pyrophosphatase"/>
</dbReference>
<dbReference type="InterPro" id="IPR029001">
    <property type="entry name" value="ITPase-like_fam"/>
</dbReference>
<dbReference type="InterPro" id="IPR002637">
    <property type="entry name" value="RdgB/HAM1"/>
</dbReference>
<dbReference type="NCBIfam" id="NF002698">
    <property type="entry name" value="PRK02491.1"/>
    <property type="match status" value="1"/>
</dbReference>
<dbReference type="NCBIfam" id="NF011397">
    <property type="entry name" value="PRK14822.1"/>
    <property type="match status" value="1"/>
</dbReference>
<dbReference type="NCBIfam" id="TIGR00042">
    <property type="entry name" value="RdgB/HAM1 family non-canonical purine NTP pyrophosphatase"/>
    <property type="match status" value="1"/>
</dbReference>
<dbReference type="PANTHER" id="PTHR11067:SF9">
    <property type="entry name" value="INOSINE TRIPHOSPHATE PYROPHOSPHATASE"/>
    <property type="match status" value="1"/>
</dbReference>
<dbReference type="PANTHER" id="PTHR11067">
    <property type="entry name" value="INOSINE TRIPHOSPHATE PYROPHOSPHATASE/HAM1 PROTEIN"/>
    <property type="match status" value="1"/>
</dbReference>
<dbReference type="Pfam" id="PF01725">
    <property type="entry name" value="Ham1p_like"/>
    <property type="match status" value="1"/>
</dbReference>
<dbReference type="SUPFAM" id="SSF52972">
    <property type="entry name" value="ITPase-like"/>
    <property type="match status" value="1"/>
</dbReference>
<evidence type="ECO:0000255" key="1">
    <source>
        <dbReference type="HAMAP-Rule" id="MF_01405"/>
    </source>
</evidence>
<evidence type="ECO:0000305" key="2"/>
<feature type="chain" id="PRO_0000178244" description="dITP/XTP pyrophosphatase">
    <location>
        <begin position="1"/>
        <end position="328"/>
    </location>
</feature>
<feature type="region of interest" description="Unknown">
    <location>
        <begin position="1"/>
        <end position="129"/>
    </location>
</feature>
<feature type="region of interest" description="NTP pyrophosphatase">
    <location>
        <begin position="130"/>
        <end position="324"/>
    </location>
</feature>
<feature type="active site" description="Proton acceptor" evidence="1">
    <location>
        <position position="196"/>
    </location>
</feature>
<feature type="binding site" evidence="1">
    <location>
        <begin position="134"/>
        <end position="139"/>
    </location>
    <ligand>
        <name>substrate</name>
    </ligand>
</feature>
<feature type="binding site" evidence="1">
    <location>
        <position position="196"/>
    </location>
    <ligand>
        <name>Mg(2+)</name>
        <dbReference type="ChEBI" id="CHEBI:18420"/>
    </ligand>
</feature>
<feature type="binding site" evidence="1">
    <location>
        <position position="197"/>
    </location>
    <ligand>
        <name>substrate</name>
    </ligand>
</feature>
<feature type="binding site" evidence="1">
    <location>
        <begin position="280"/>
        <end position="283"/>
    </location>
    <ligand>
        <name>substrate</name>
    </ligand>
</feature>
<feature type="binding site" evidence="1">
    <location>
        <position position="303"/>
    </location>
    <ligand>
        <name>substrate</name>
    </ligand>
</feature>
<feature type="binding site" evidence="1">
    <location>
        <begin position="308"/>
        <end position="309"/>
    </location>
    <ligand>
        <name>substrate</name>
    </ligand>
</feature>
<organism>
    <name type="scientific">Streptococcus pyogenes serotype M6 (strain ATCC BAA-946 / MGAS10394)</name>
    <dbReference type="NCBI Taxonomy" id="286636"/>
    <lineage>
        <taxon>Bacteria</taxon>
        <taxon>Bacillati</taxon>
        <taxon>Bacillota</taxon>
        <taxon>Bacilli</taxon>
        <taxon>Lactobacillales</taxon>
        <taxon>Streptococcaceae</taxon>
        <taxon>Streptococcus</taxon>
    </lineage>
</organism>
<gene>
    <name type="ordered locus">M6_Spy0330</name>
</gene>
<accession>Q5XDP8</accession>
<proteinExistence type="inferred from homology"/>
<protein>
    <recommendedName>
        <fullName evidence="1">dITP/XTP pyrophosphatase</fullName>
        <ecNumber evidence="1">3.6.1.66</ecNumber>
    </recommendedName>
    <alternativeName>
        <fullName evidence="1">Non-canonical purine NTP pyrophosphatase</fullName>
    </alternativeName>
    <alternativeName>
        <fullName evidence="1">Non-standard purine NTP pyrophosphatase</fullName>
    </alternativeName>
    <alternativeName>
        <fullName evidence="1">Nucleoside-triphosphate diphosphatase</fullName>
    </alternativeName>
    <alternativeName>
        <fullName evidence="1">Nucleoside-triphosphate pyrophosphatase</fullName>
        <shortName evidence="1">NTPase</shortName>
    </alternativeName>
</protein>
<name>IXTPA_STRP6</name>
<comment type="function">
    <text evidence="1">Pyrophosphatase that catalyzes the hydrolysis of nucleoside triphosphates to their monophosphate derivatives, with a high preference for the non-canonical purine nucleotides XTP (xanthosine triphosphate), dITP (deoxyinosine triphosphate) and ITP. Seems to function as a house-cleaning enzyme that removes non-canonical purine nucleotides from the nucleotide pool, thus preventing their incorporation into DNA/RNA and avoiding chromosomal lesions.</text>
</comment>
<comment type="catalytic activity">
    <reaction evidence="1">
        <text>XTP + H2O = XMP + diphosphate + H(+)</text>
        <dbReference type="Rhea" id="RHEA:28610"/>
        <dbReference type="ChEBI" id="CHEBI:15377"/>
        <dbReference type="ChEBI" id="CHEBI:15378"/>
        <dbReference type="ChEBI" id="CHEBI:33019"/>
        <dbReference type="ChEBI" id="CHEBI:57464"/>
        <dbReference type="ChEBI" id="CHEBI:61314"/>
        <dbReference type="EC" id="3.6.1.66"/>
    </reaction>
</comment>
<comment type="catalytic activity">
    <reaction evidence="1">
        <text>dITP + H2O = dIMP + diphosphate + H(+)</text>
        <dbReference type="Rhea" id="RHEA:28342"/>
        <dbReference type="ChEBI" id="CHEBI:15377"/>
        <dbReference type="ChEBI" id="CHEBI:15378"/>
        <dbReference type="ChEBI" id="CHEBI:33019"/>
        <dbReference type="ChEBI" id="CHEBI:61194"/>
        <dbReference type="ChEBI" id="CHEBI:61382"/>
        <dbReference type="EC" id="3.6.1.66"/>
    </reaction>
</comment>
<comment type="catalytic activity">
    <reaction evidence="1">
        <text>ITP + H2O = IMP + diphosphate + H(+)</text>
        <dbReference type="Rhea" id="RHEA:29399"/>
        <dbReference type="ChEBI" id="CHEBI:15377"/>
        <dbReference type="ChEBI" id="CHEBI:15378"/>
        <dbReference type="ChEBI" id="CHEBI:33019"/>
        <dbReference type="ChEBI" id="CHEBI:58053"/>
        <dbReference type="ChEBI" id="CHEBI:61402"/>
        <dbReference type="EC" id="3.6.1.66"/>
    </reaction>
</comment>
<comment type="cofactor">
    <cofactor evidence="1">
        <name>Mg(2+)</name>
        <dbReference type="ChEBI" id="CHEBI:18420"/>
    </cofactor>
    <text evidence="1">Binds 1 Mg(2+) ion per subunit.</text>
</comment>
<comment type="subunit">
    <text evidence="1">Homodimer.</text>
</comment>
<comment type="similarity">
    <text evidence="1 2">Belongs to the HAM1 NTPase family.</text>
</comment>
<comment type="sequence caution" evidence="2">
    <conflict type="erroneous initiation">
        <sequence resource="EMBL-CDS" id="AAT86465"/>
    </conflict>
</comment>